<sequence>MAKPLTDGERRKQISVRGLAGLGDVAEVRKSFNRHLHFTLVKDRNVATRRDYYLALAHTVRDHLVGRWIRTQQRYYERDPKRIYYLSLEFYMGRTLQNTMVNLGLQNACDEAIYQLGLDLEELEEIEEDAGLGNGGLGRLAACFLDSMATLGLAAYGYGIRYEFGIFNQKIVNGWQVEEADDWLRYGNPWEKARPEYMLPVHFYGRVEHSPEGVRWLDTQVVLAMPYDTPVPGYKNDTVNTMRLWSAKAPNDFKLHDFNVGGYIEAVLDRNLAENISRVLYPNDNFFEGKELRLKQEYFVVAATLQDIIRRFKSSKFGCRDPVRTSFETFPDKVAIQLNDTHPALAIPELMRILVDVEKVDWGKAWEITKKTCAYTNHTVLPEALERWPVSMFEKLLPRHLDIIYAINQRHLDHVAALFPGDVDRLRRMSVIEEGDCKRINMAHLCVIGSHAVNGVARIHSEIVRQSVFKDFYELEPEKFQNKTNGITPRRWLLLCNPGLAETIVERIGEDFLTDLSQLKKLLPLVGDEALIRDVAQVKQENKVKFSAFLEKQYGVKVNPSSMFDVHVKRIHEYKRQLLNCLHVVTLYNRIKKDPTQAFVPRTVMIGGKAAPGYHMAKKIIKLVTSIGDIVNHDPIVGDRLKVIFLENYRVSLAEKVIPAADLSQQISTAGTEASGTGNMKFMLNGALTIGTMDGANVEMAEEAGAENLFIFGLRVEDVEALDRKGYNAHEYYNHLPELQQAVDQINSGFFSPREPDCFKDVVNMLLNHDRFKVFADYEAYVACQAQVDQLYRNPKEWTKKVIRNIACSGKFSSDRTITEYARDIWGAEPPALQTPPPSLPRD</sequence>
<proteinExistence type="evidence at transcript level"/>
<accession>Q5MIB6</accession>
<evidence type="ECO:0000250" key="1"/>
<evidence type="ECO:0000250" key="2">
    <source>
        <dbReference type="UniProtKB" id="P11216"/>
    </source>
</evidence>
<evidence type="ECO:0000250" key="3">
    <source>
        <dbReference type="UniProtKB" id="P11217"/>
    </source>
</evidence>
<evidence type="ECO:0000250" key="4">
    <source>
        <dbReference type="UniProtKB" id="P53534"/>
    </source>
</evidence>
<evidence type="ECO:0000250" key="5">
    <source>
        <dbReference type="UniProtKB" id="Q8CI94"/>
    </source>
</evidence>
<evidence type="ECO:0000305" key="6"/>
<dbReference type="EC" id="2.4.1.1"/>
<dbReference type="EMBL" id="AY827550">
    <property type="protein sequence ID" value="AAV87308.1"/>
    <property type="molecule type" value="mRNA"/>
</dbReference>
<dbReference type="RefSeq" id="NP_001020034.1">
    <property type="nucleotide sequence ID" value="NM_001024863.1"/>
</dbReference>
<dbReference type="SMR" id="Q5MIB6"/>
<dbReference type="STRING" id="9940.ENSOARP00000007688"/>
<dbReference type="CAZy" id="GT35">
    <property type="family name" value="Glycosyltransferase Family 35"/>
</dbReference>
<dbReference type="PaxDb" id="9940-ENSOARP00000007688"/>
<dbReference type="GeneID" id="554325"/>
<dbReference type="KEGG" id="oas:554325"/>
<dbReference type="CTD" id="5834"/>
<dbReference type="eggNOG" id="KOG2099">
    <property type="taxonomic scope" value="Eukaryota"/>
</dbReference>
<dbReference type="OrthoDB" id="9215500at2759"/>
<dbReference type="Proteomes" id="UP000002356">
    <property type="component" value="Unplaced"/>
</dbReference>
<dbReference type="GO" id="GO:0005737">
    <property type="term" value="C:cytoplasm"/>
    <property type="evidence" value="ECO:0007669"/>
    <property type="project" value="TreeGrafter"/>
</dbReference>
<dbReference type="GO" id="GO:0008184">
    <property type="term" value="F:glycogen phosphorylase activity"/>
    <property type="evidence" value="ECO:0007669"/>
    <property type="project" value="InterPro"/>
</dbReference>
<dbReference type="GO" id="GO:0030170">
    <property type="term" value="F:pyridoxal phosphate binding"/>
    <property type="evidence" value="ECO:0007669"/>
    <property type="project" value="InterPro"/>
</dbReference>
<dbReference type="GO" id="GO:0005980">
    <property type="term" value="P:glycogen catabolic process"/>
    <property type="evidence" value="ECO:0007669"/>
    <property type="project" value="TreeGrafter"/>
</dbReference>
<dbReference type="CDD" id="cd04300">
    <property type="entry name" value="GT35_Glycogen_Phosphorylase"/>
    <property type="match status" value="1"/>
</dbReference>
<dbReference type="FunFam" id="3.40.50.2000:FF:000005">
    <property type="entry name" value="Alpha-1,4 glucan phosphorylase"/>
    <property type="match status" value="1"/>
</dbReference>
<dbReference type="FunFam" id="3.40.50.2000:FF:000153">
    <property type="entry name" value="Alpha-1,4 glucan phosphorylase"/>
    <property type="match status" value="1"/>
</dbReference>
<dbReference type="FunFam" id="3.40.50.2000:FF:000197">
    <property type="entry name" value="Alpha-1,4 glucan phosphorylase"/>
    <property type="match status" value="1"/>
</dbReference>
<dbReference type="Gene3D" id="3.40.50.2000">
    <property type="entry name" value="Glycogen Phosphorylase B"/>
    <property type="match status" value="2"/>
</dbReference>
<dbReference type="InterPro" id="IPR011833">
    <property type="entry name" value="Glycg_phsphrylas"/>
</dbReference>
<dbReference type="InterPro" id="IPR000811">
    <property type="entry name" value="Glyco_trans_35"/>
</dbReference>
<dbReference type="InterPro" id="IPR035090">
    <property type="entry name" value="Pyridoxal_P_attach_site"/>
</dbReference>
<dbReference type="NCBIfam" id="TIGR02093">
    <property type="entry name" value="P_ylase"/>
    <property type="match status" value="1"/>
</dbReference>
<dbReference type="PANTHER" id="PTHR11468">
    <property type="entry name" value="GLYCOGEN PHOSPHORYLASE"/>
    <property type="match status" value="1"/>
</dbReference>
<dbReference type="PANTHER" id="PTHR11468:SF29">
    <property type="entry name" value="GLYCOGEN PHOSPHORYLASE, BRAIN FORM"/>
    <property type="match status" value="1"/>
</dbReference>
<dbReference type="Pfam" id="PF00343">
    <property type="entry name" value="Phosphorylase"/>
    <property type="match status" value="1"/>
</dbReference>
<dbReference type="PIRSF" id="PIRSF000460">
    <property type="entry name" value="Pprylas_GlgP"/>
    <property type="match status" value="1"/>
</dbReference>
<dbReference type="SUPFAM" id="SSF53756">
    <property type="entry name" value="UDP-Glycosyltransferase/glycogen phosphorylase"/>
    <property type="match status" value="1"/>
</dbReference>
<dbReference type="PROSITE" id="PS00102">
    <property type="entry name" value="PHOSPHORYLASE"/>
    <property type="match status" value="1"/>
</dbReference>
<reference key="1">
    <citation type="submission" date="2004-11" db="EMBL/GenBank/DDBJ databases">
        <title>Characterization of ovine brain and liver glycogen phosphorylases.</title>
        <authorList>
            <person name="Walker K.R."/>
            <person name="Blechynden L.M."/>
            <person name="Binz N."/>
            <person name="Laing N.G."/>
        </authorList>
    </citation>
    <scope>NUCLEOTIDE SEQUENCE [MRNA]</scope>
    <source>
        <tissue>Heart</tissue>
    </source>
</reference>
<gene>
    <name type="primary">PYGB</name>
</gene>
<organism>
    <name type="scientific">Ovis aries</name>
    <name type="common">Sheep</name>
    <dbReference type="NCBI Taxonomy" id="9940"/>
    <lineage>
        <taxon>Eukaryota</taxon>
        <taxon>Metazoa</taxon>
        <taxon>Chordata</taxon>
        <taxon>Craniata</taxon>
        <taxon>Vertebrata</taxon>
        <taxon>Euteleostomi</taxon>
        <taxon>Mammalia</taxon>
        <taxon>Eutheria</taxon>
        <taxon>Laurasiatheria</taxon>
        <taxon>Artiodactyla</taxon>
        <taxon>Ruminantia</taxon>
        <taxon>Pecora</taxon>
        <taxon>Bovidae</taxon>
        <taxon>Caprinae</taxon>
        <taxon>Ovis</taxon>
    </lineage>
</organism>
<name>PYGB_SHEEP</name>
<feature type="initiator methionine" description="Removed" evidence="2">
    <location>
        <position position="1"/>
    </location>
</feature>
<feature type="chain" id="PRO_0000188539" description="Glycogen phosphorylase, brain form">
    <location>
        <begin position="2"/>
        <end position="843"/>
    </location>
</feature>
<feature type="region of interest" description="Pyridoxal 5'-phosphate" evidence="2">
    <location>
        <begin position="677"/>
        <end position="678"/>
    </location>
</feature>
<feature type="binding site" evidence="2">
    <location>
        <position position="43"/>
    </location>
    <ligand>
        <name>AMP</name>
        <dbReference type="ChEBI" id="CHEBI:456215"/>
        <note>ligand shared between dimeric partners</note>
    </ligand>
</feature>
<feature type="binding site" description="in other chain" evidence="2">
    <location>
        <position position="197"/>
    </location>
    <ligand>
        <name>AMP</name>
        <dbReference type="ChEBI" id="CHEBI:456215"/>
        <note>ligand shared between dimeric partners</note>
    </ligand>
</feature>
<feature type="binding site" description="in other chain" evidence="2">
    <location>
        <position position="310"/>
    </location>
    <ligand>
        <name>AMP</name>
        <dbReference type="ChEBI" id="CHEBI:456215"/>
        <note>ligand shared between dimeric partners</note>
    </ligand>
</feature>
<feature type="binding site" evidence="2">
    <location>
        <position position="569"/>
    </location>
    <ligand>
        <name>pyridoxal 5'-phosphate</name>
        <dbReference type="ChEBI" id="CHEBI:597326"/>
    </ligand>
</feature>
<feature type="site" description="Participates in a stacking interaction with the adenine ring of AMP" evidence="2">
    <location>
        <position position="76"/>
    </location>
</feature>
<feature type="site" description="Involved in the association of subunits" evidence="1">
    <location>
        <position position="109"/>
    </location>
</feature>
<feature type="site" description="Involved in the association of subunits" evidence="1">
    <location>
        <position position="143"/>
    </location>
</feature>
<feature type="site" description="May be involved in allosteric control" evidence="1">
    <location>
        <position position="156"/>
    </location>
</feature>
<feature type="modified residue" description="N-acetylalanine" evidence="2">
    <location>
        <position position="2"/>
    </location>
</feature>
<feature type="modified residue" description="Phosphoserine; by PHK; in form phosphorylase A" evidence="4">
    <location>
        <position position="15"/>
    </location>
</feature>
<feature type="modified residue" description="Phosphotyrosine" evidence="5">
    <location>
        <position position="197"/>
    </location>
</feature>
<feature type="modified residue" description="Phosphotyrosine" evidence="5">
    <location>
        <position position="473"/>
    </location>
</feature>
<feature type="modified residue" description="N6-(pyridoxal phosphate)lysine" evidence="2">
    <location>
        <position position="681"/>
    </location>
</feature>
<protein>
    <recommendedName>
        <fullName>Glycogen phosphorylase, brain form</fullName>
        <ecNumber>2.4.1.1</ecNumber>
    </recommendedName>
</protein>
<keyword id="KW-0007">Acetylation</keyword>
<keyword id="KW-0021">Allosteric enzyme</keyword>
<keyword id="KW-0119">Carbohydrate metabolism</keyword>
<keyword id="KW-0321">Glycogen metabolism</keyword>
<keyword id="KW-0328">Glycosyltransferase</keyword>
<keyword id="KW-0597">Phosphoprotein</keyword>
<keyword id="KW-0663">Pyridoxal phosphate</keyword>
<keyword id="KW-1185">Reference proteome</keyword>
<keyword id="KW-0808">Transferase</keyword>
<comment type="function">
    <text evidence="2">Glycogen phosphorylase that regulates glycogen mobilization. Phosphorylase is an important allosteric enzyme in carbohydrate metabolism. Enzymes from different sources differ in their regulatory mechanisms and in their natural substrates. However, all known phosphorylases share catalytic and structural properties.</text>
</comment>
<comment type="catalytic activity">
    <reaction>
        <text>[(1-&gt;4)-alpha-D-glucosyl](n) + phosphate = [(1-&gt;4)-alpha-D-glucosyl](n-1) + alpha-D-glucose 1-phosphate</text>
        <dbReference type="Rhea" id="RHEA:41732"/>
        <dbReference type="Rhea" id="RHEA-COMP:9584"/>
        <dbReference type="Rhea" id="RHEA-COMP:9586"/>
        <dbReference type="ChEBI" id="CHEBI:15444"/>
        <dbReference type="ChEBI" id="CHEBI:43474"/>
        <dbReference type="ChEBI" id="CHEBI:58601"/>
        <dbReference type="EC" id="2.4.1.1"/>
    </reaction>
</comment>
<comment type="cofactor">
    <cofactor evidence="1">
        <name>pyridoxal 5'-phosphate</name>
        <dbReference type="ChEBI" id="CHEBI:597326"/>
    </cofactor>
</comment>
<comment type="activity regulation">
    <text evidence="2">Activity of phosphorylase is controlled both by allosteric means (through the non-covalent binding of metabolites) and by covalent modification. Thus AMP allosterically activates, whereas ATP, ADP, and glucose-6-phosphate allosterically inhibit, phosphorylase B (By similarity).</text>
</comment>
<comment type="subunit">
    <text evidence="2">Homodimer. Dimers associate into a tetramer to form the enzymatically active phosphorylase A (By similarity).</text>
</comment>
<comment type="PTM">
    <text evidence="3">Phosphorylation of Ser-15 converts phosphorylase B (unphosphorylated) to phosphorylase A.</text>
</comment>
<comment type="similarity">
    <text evidence="6">Belongs to the glycogen phosphorylase family.</text>
</comment>